<accession>Q6GU68</accession>
<dbReference type="EMBL" id="AB024538">
    <property type="protein sequence ID" value="BAA85972.1"/>
    <property type="molecule type" value="mRNA"/>
</dbReference>
<dbReference type="EMBL" id="AB024539">
    <property type="protein sequence ID" value="BAA85973.1"/>
    <property type="molecule type" value="Genomic_DNA"/>
</dbReference>
<dbReference type="EMBL" id="BC006602">
    <property type="protein sequence ID" value="AAH06602.1"/>
    <property type="molecule type" value="mRNA"/>
</dbReference>
<dbReference type="CCDS" id="CCDS23237.1"/>
<dbReference type="RefSeq" id="NP_001182360.1">
    <property type="nucleotide sequence ID" value="NM_001195431.1"/>
</dbReference>
<dbReference type="RefSeq" id="NP_036173.1">
    <property type="nucleotide sequence ID" value="NM_012043.4"/>
</dbReference>
<dbReference type="SMR" id="Q6GU68"/>
<dbReference type="BioGRID" id="205089">
    <property type="interactions" value="1"/>
</dbReference>
<dbReference type="FunCoup" id="Q6GU68">
    <property type="interactions" value="407"/>
</dbReference>
<dbReference type="STRING" id="10090.ENSMUSP00000045142"/>
<dbReference type="GlyCosmos" id="Q6GU68">
    <property type="glycosylation" value="2 sites, No reported glycans"/>
</dbReference>
<dbReference type="GlyGen" id="Q6GU68">
    <property type="glycosylation" value="4 sites, 3 N-linked glycans (3 sites)"/>
</dbReference>
<dbReference type="iPTMnet" id="Q6GU68"/>
<dbReference type="PhosphoSitePlus" id="Q6GU68"/>
<dbReference type="SwissPalm" id="Q6GU68"/>
<dbReference type="PaxDb" id="10090-ENSMUSP00000045142"/>
<dbReference type="PeptideAtlas" id="Q6GU68"/>
<dbReference type="ProteomicsDB" id="269002"/>
<dbReference type="Pumba" id="Q6GU68"/>
<dbReference type="Antibodypedia" id="55140">
    <property type="antibodies" value="108 antibodies from 14 providers"/>
</dbReference>
<dbReference type="DNASU" id="26968"/>
<dbReference type="Ensembl" id="ENSMUST00000041477.15">
    <property type="protein sequence ID" value="ENSMUSP00000045142.8"/>
    <property type="gene ID" value="ENSMUSG00000037206.16"/>
</dbReference>
<dbReference type="Ensembl" id="ENSMUST00000168864.4">
    <property type="protein sequence ID" value="ENSMUSP00000126963.3"/>
    <property type="gene ID" value="ENSMUSG00000037206.16"/>
</dbReference>
<dbReference type="GeneID" id="26968"/>
<dbReference type="KEGG" id="mmu:26968"/>
<dbReference type="UCSC" id="uc009pwk.2">
    <property type="organism name" value="mouse"/>
</dbReference>
<dbReference type="AGR" id="MGI:1349645"/>
<dbReference type="CTD" id="3671"/>
<dbReference type="MGI" id="MGI:1349645">
    <property type="gene designation" value="Islr"/>
</dbReference>
<dbReference type="VEuPathDB" id="HostDB:ENSMUSG00000037206"/>
<dbReference type="eggNOG" id="KOG0619">
    <property type="taxonomic scope" value="Eukaryota"/>
</dbReference>
<dbReference type="GeneTree" id="ENSGT00940000160967"/>
<dbReference type="HOGENOM" id="CLU_658828_0_0_1"/>
<dbReference type="InParanoid" id="Q6GU68"/>
<dbReference type="OMA" id="AHNEIRV"/>
<dbReference type="OrthoDB" id="2151624at2759"/>
<dbReference type="PhylomeDB" id="Q6GU68"/>
<dbReference type="TreeFam" id="TF351112"/>
<dbReference type="Reactome" id="R-MMU-114608">
    <property type="pathway name" value="Platelet degranulation"/>
</dbReference>
<dbReference type="BioGRID-ORCS" id="26968">
    <property type="hits" value="1 hit in 77 CRISPR screens"/>
</dbReference>
<dbReference type="ChiTaRS" id="Islr">
    <property type="organism name" value="mouse"/>
</dbReference>
<dbReference type="PRO" id="PR:Q6GU68"/>
<dbReference type="Proteomes" id="UP000000589">
    <property type="component" value="Chromosome 9"/>
</dbReference>
<dbReference type="RNAct" id="Q6GU68">
    <property type="molecule type" value="protein"/>
</dbReference>
<dbReference type="Bgee" id="ENSMUSG00000037206">
    <property type="expression patterns" value="Expressed in vault of skull and 220 other cell types or tissues"/>
</dbReference>
<dbReference type="ExpressionAtlas" id="Q6GU68">
    <property type="expression patterns" value="baseline and differential"/>
</dbReference>
<dbReference type="GO" id="GO:0005615">
    <property type="term" value="C:extracellular space"/>
    <property type="evidence" value="ECO:0007005"/>
    <property type="project" value="BHF-UCL"/>
</dbReference>
<dbReference type="FunFam" id="2.60.40.10:FF:001692">
    <property type="entry name" value="Immunoglobulin superfamily containing leucine-rich repeat protein"/>
    <property type="match status" value="1"/>
</dbReference>
<dbReference type="FunFam" id="3.80.10.10:FF:000058">
    <property type="entry name" value="immunoglobulin superfamily containing leucine-rich repeat protein 2"/>
    <property type="match status" value="1"/>
</dbReference>
<dbReference type="Gene3D" id="2.60.40.10">
    <property type="entry name" value="Immunoglobulins"/>
    <property type="match status" value="1"/>
</dbReference>
<dbReference type="Gene3D" id="3.80.10.10">
    <property type="entry name" value="Ribonuclease Inhibitor"/>
    <property type="match status" value="1"/>
</dbReference>
<dbReference type="InterPro" id="IPR000483">
    <property type="entry name" value="Cys-rich_flank_reg_C"/>
</dbReference>
<dbReference type="InterPro" id="IPR007110">
    <property type="entry name" value="Ig-like_dom"/>
</dbReference>
<dbReference type="InterPro" id="IPR036179">
    <property type="entry name" value="Ig-like_dom_sf"/>
</dbReference>
<dbReference type="InterPro" id="IPR013783">
    <property type="entry name" value="Ig-like_fold"/>
</dbReference>
<dbReference type="InterPro" id="IPR003598">
    <property type="entry name" value="Ig_sub2"/>
</dbReference>
<dbReference type="InterPro" id="IPR001611">
    <property type="entry name" value="Leu-rich_rpt"/>
</dbReference>
<dbReference type="InterPro" id="IPR003591">
    <property type="entry name" value="Leu-rich_rpt_typical-subtyp"/>
</dbReference>
<dbReference type="InterPro" id="IPR032675">
    <property type="entry name" value="LRR_dom_sf"/>
</dbReference>
<dbReference type="PANTHER" id="PTHR24366">
    <property type="entry name" value="IG(IMMUNOGLOBULIN) AND LRR(LEUCINE RICH REPEAT) DOMAINS"/>
    <property type="match status" value="1"/>
</dbReference>
<dbReference type="PANTHER" id="PTHR24366:SF14">
    <property type="entry name" value="IMMUNOGLOBULIN SUPERFAMILY CONTAINING LEUCINE-RICH REPEAT PROTEIN"/>
    <property type="match status" value="1"/>
</dbReference>
<dbReference type="Pfam" id="PF13855">
    <property type="entry name" value="LRR_8"/>
    <property type="match status" value="2"/>
</dbReference>
<dbReference type="SMART" id="SM00408">
    <property type="entry name" value="IGc2"/>
    <property type="match status" value="1"/>
</dbReference>
<dbReference type="SMART" id="SM00369">
    <property type="entry name" value="LRR_TYP"/>
    <property type="match status" value="5"/>
</dbReference>
<dbReference type="SMART" id="SM00082">
    <property type="entry name" value="LRRCT"/>
    <property type="match status" value="1"/>
</dbReference>
<dbReference type="SUPFAM" id="SSF48726">
    <property type="entry name" value="Immunoglobulin"/>
    <property type="match status" value="1"/>
</dbReference>
<dbReference type="SUPFAM" id="SSF52058">
    <property type="entry name" value="L domain-like"/>
    <property type="match status" value="1"/>
</dbReference>
<dbReference type="PROSITE" id="PS50835">
    <property type="entry name" value="IG_LIKE"/>
    <property type="match status" value="1"/>
</dbReference>
<dbReference type="PROSITE" id="PS51450">
    <property type="entry name" value="LRR"/>
    <property type="match status" value="5"/>
</dbReference>
<keyword id="KW-1015">Disulfide bond</keyword>
<keyword id="KW-0325">Glycoprotein</keyword>
<keyword id="KW-0393">Immunoglobulin domain</keyword>
<keyword id="KW-0433">Leucine-rich repeat</keyword>
<keyword id="KW-1185">Reference proteome</keyword>
<keyword id="KW-0677">Repeat</keyword>
<keyword id="KW-0964">Secreted</keyword>
<keyword id="KW-0732">Signal</keyword>
<evidence type="ECO:0000255" key="1"/>
<evidence type="ECO:0000255" key="2">
    <source>
        <dbReference type="PROSITE-ProRule" id="PRU00114"/>
    </source>
</evidence>
<evidence type="ECO:0000269" key="3">
    <source>
    </source>
</evidence>
<evidence type="ECO:0000269" key="4">
    <source>
    </source>
</evidence>
<evidence type="ECO:0000305" key="5"/>
<proteinExistence type="evidence at protein level"/>
<organism>
    <name type="scientific">Mus musculus</name>
    <name type="common">Mouse</name>
    <dbReference type="NCBI Taxonomy" id="10090"/>
    <lineage>
        <taxon>Eukaryota</taxon>
        <taxon>Metazoa</taxon>
        <taxon>Chordata</taxon>
        <taxon>Craniata</taxon>
        <taxon>Vertebrata</taxon>
        <taxon>Euteleostomi</taxon>
        <taxon>Mammalia</taxon>
        <taxon>Eutheria</taxon>
        <taxon>Euarchontoglires</taxon>
        <taxon>Glires</taxon>
        <taxon>Rodentia</taxon>
        <taxon>Myomorpha</taxon>
        <taxon>Muroidea</taxon>
        <taxon>Muridae</taxon>
        <taxon>Murinae</taxon>
        <taxon>Mus</taxon>
        <taxon>Mus</taxon>
    </lineage>
</organism>
<gene>
    <name type="primary">Islr</name>
</gene>
<comment type="subcellular location">
    <subcellularLocation>
        <location evidence="5">Secreted</location>
    </subcellularLocation>
</comment>
<comment type="tissue specificity">
    <text evidence="3">Detected in thyroid, heart, retina and spinal cord.</text>
</comment>
<comment type="developmental stage">
    <text evidence="3">Detected at all stages of development and more abundant in the latter period.</text>
</comment>
<name>ISLR_MOUSE</name>
<protein>
    <recommendedName>
        <fullName>Immunoglobulin superfamily containing leucine-rich repeat protein</fullName>
    </recommendedName>
</protein>
<sequence>MRALCLLCWAVLLNLVRACPEPCDCGEKYGFQIADCAYRDLEGVPPGFPANVTTLSLSANRLPGLPEGAFREVPLLQSLWLAHNEIRSVAIGALAPLSHLKSLDLSHNLLSEFAWSDLHNLSALQLLKMDSNELAFIPRDAFSSLSALRSLQLNHNRLHALAEGTFAPLTALSHLQINDNPFDCTCGIVWFKTWALASAVSIPEQDNIACTTPHVLKGIPLGRLPPLPCSAPSVQLSYQPSQDGAELRPGFVLALHCDVDGQPVPQLHWHIHTPGGTVEIASPNVGTDGRALPGALATSGQPRFQAFANGSLLIPDFGKLEEGTYSCLATNELGSAESSVNVALATPGEGGEDAVGHKFHGKAVEGKGCYTVDNEVQPSGPEDNVVIIYLSRAGPPEAAIAADGRPAQQFSGILLLGQSLLVLSFFYF</sequence>
<feature type="signal peptide" evidence="1">
    <location>
        <begin position="1"/>
        <end position="18"/>
    </location>
</feature>
<feature type="chain" id="PRO_0000312209" description="Immunoglobulin superfamily containing leucine-rich repeat protein">
    <location>
        <begin position="19"/>
        <end position="428"/>
    </location>
</feature>
<feature type="domain" description="LRRNT">
    <location>
        <begin position="19"/>
        <end position="50"/>
    </location>
</feature>
<feature type="repeat" description="LRR 1">
    <location>
        <begin position="51"/>
        <end position="72"/>
    </location>
</feature>
<feature type="repeat" description="LRR 2">
    <location>
        <begin position="75"/>
        <end position="98"/>
    </location>
</feature>
<feature type="repeat" description="LRR 3">
    <location>
        <begin position="99"/>
        <end position="122"/>
    </location>
</feature>
<feature type="repeat" description="LRR 4">
    <location>
        <begin position="123"/>
        <end position="144"/>
    </location>
</feature>
<feature type="repeat" description="LRR 5">
    <location>
        <begin position="147"/>
        <end position="168"/>
    </location>
</feature>
<feature type="domain" description="LRRCT">
    <location>
        <begin position="180"/>
        <end position="231"/>
    </location>
</feature>
<feature type="domain" description="Ig-like">
    <location>
        <begin position="232"/>
        <end position="343"/>
    </location>
</feature>
<feature type="glycosylation site" description="N-linked (GlcNAc...) asparagine" evidence="4">
    <location>
        <position position="51"/>
    </location>
</feature>
<feature type="glycosylation site" description="N-linked (GlcNAc...) asparagine" evidence="4">
    <location>
        <position position="309"/>
    </location>
</feature>
<feature type="disulfide bond" evidence="2">
    <location>
        <begin position="257"/>
        <end position="327"/>
    </location>
</feature>
<reference key="1">
    <citation type="journal article" date="1999" name="Genomics">
        <title>Human and mouse ISLR (immunoglobulin superfamily containing leucine-rich repeat) genes: genomic structure and tissue expression.</title>
        <authorList>
            <person name="Nagasawa A."/>
            <person name="Kudoh J."/>
            <person name="Noda S."/>
            <person name="Mashima Y."/>
            <person name="Wright A."/>
            <person name="Oguchi Y."/>
            <person name="Shimizu N."/>
        </authorList>
    </citation>
    <scope>NUCLEOTIDE SEQUENCE [GENOMIC DNA / MRNA]</scope>
    <scope>TISSUE SPECIFICITY</scope>
    <scope>DEVELOPMENTAL STAGE</scope>
    <source>
        <strain>BALB/cJ</strain>
        <tissue>Skeletal muscle</tissue>
    </source>
</reference>
<reference key="2">
    <citation type="journal article" date="2004" name="Genome Res.">
        <title>The status, quality, and expansion of the NIH full-length cDNA project: the Mammalian Gene Collection (MGC).</title>
        <authorList>
            <consortium name="The MGC Project Team"/>
        </authorList>
    </citation>
    <scope>NUCLEOTIDE SEQUENCE [LARGE SCALE MRNA]</scope>
    <source>
        <strain>FVB/N</strain>
        <tissue>Mammary tumor</tissue>
    </source>
</reference>
<reference key="3">
    <citation type="journal article" date="2009" name="Mol. Cell. Proteomics">
        <title>The mouse C2C12 myoblast cell surface N-linked glycoproteome: identification, glycosite occupancy, and membrane orientation.</title>
        <authorList>
            <person name="Gundry R.L."/>
            <person name="Raginski K."/>
            <person name="Tarasova Y."/>
            <person name="Tchernyshyov I."/>
            <person name="Bausch-Fluck D."/>
            <person name="Elliott S.T."/>
            <person name="Boheler K.R."/>
            <person name="Van Eyk J.E."/>
            <person name="Wollscheid B."/>
        </authorList>
    </citation>
    <scope>GLYCOSYLATION [LARGE SCALE ANALYSIS] AT ASN-51 AND ASN-309</scope>
    <source>
        <tissue>Myoblast</tissue>
    </source>
</reference>